<keyword id="KW-0963">Cytoplasm</keyword>
<keyword id="KW-0903">Direct protein sequencing</keyword>
<keyword id="KW-0378">Hydrolase</keyword>
<keyword id="KW-0479">Metal-binding</keyword>
<keyword id="KW-0539">Nucleus</keyword>
<keyword id="KW-0645">Protease</keyword>
<keyword id="KW-1185">Reference proteome</keyword>
<keyword id="KW-0677">Repeat</keyword>
<keyword id="KW-0788">Thiol protease</keyword>
<keyword id="KW-0833">Ubl conjugation pathway</keyword>
<keyword id="KW-0862">Zinc</keyword>
<keyword id="KW-0863">Zinc-finger</keyword>
<proteinExistence type="evidence at protein level"/>
<comment type="function">
    <text evidence="5 8">Required for the adaptation to the presence of glucose in the growth medium; mediates the degradation of enzymes involved in gluconeogenesis when cells are shifted to glucose-containing medium (PubMed:12686616). Required for proteasome-dependent catabolite degradation of fructose-1,6-bisphosphatase (FBP1) (PubMed:12686616). Accelerates proteasomal breakdown of ubiquitinated proteins as it disassembles free ubiquitin chains that would compete with ubiquitinated proteins to bind to the proteasome (PubMed:9305625).</text>
</comment>
<comment type="catalytic activity">
    <reaction evidence="8">
        <text>Thiol-dependent hydrolysis of ester, thioester, amide, peptide and isopeptide bonds formed by the C-terminal Gly of ubiquitin (a 76-residue protein attached to proteins as an intracellular targeting signal).</text>
        <dbReference type="EC" id="3.4.19.12"/>
    </reaction>
</comment>
<comment type="subcellular location">
    <subcellularLocation>
        <location evidence="6">Cytoplasm</location>
    </subcellularLocation>
    <subcellularLocation>
        <location evidence="6">Nucleus</location>
    </subcellularLocation>
</comment>
<comment type="miscellaneous">
    <text evidence="7">Present with 3040 molecules/cell in log phase SD medium.</text>
</comment>
<comment type="similarity">
    <text evidence="10">Belongs to the peptidase C19 family.</text>
</comment>
<comment type="sequence caution" evidence="10">
    <conflict type="erroneous initiation">
        <sequence resource="EMBL-CDS" id="CAA85001"/>
    </conflict>
</comment>
<comment type="sequence caution" evidence="10">
    <conflict type="erroneous initiation">
        <sequence resource="EMBL-CDS" id="CAA86402"/>
    </conflict>
</comment>
<protein>
    <recommendedName>
        <fullName>Ubiquitin carboxyl-terminal hydrolase 14</fullName>
        <ecNumber evidence="8">3.4.19.12</ecNumber>
    </recommendedName>
    <alternativeName>
        <fullName>Deubiquitinating enzyme 14</fullName>
    </alternativeName>
    <alternativeName>
        <fullName>Glucose-induced degradation protein 6</fullName>
    </alternativeName>
    <alternativeName>
        <fullName>Ubiquitin thioesterase 14</fullName>
    </alternativeName>
    <alternativeName>
        <fullName>Ubiquitin-specific-processing protease 14</fullName>
    </alternativeName>
</protein>
<sequence length="781" mass="88630">MAEAVLENVNVPAVVSKDECIYCFESPYNEPLALNASPKHSLNICLNCFQATCNRHVPLHIRVTEYACDTIHSNYLTIAKVEKPKQENVEENNNNKKIKLQVIETSEDDTHNTIWSLQRFNGENVPRTVLSKSTDSDISSTALEKIEKILKAKSQDFEDKKNSWVLEISTCPHTENFQIPSKPENTVNLNQCSSCDLTQNLWLCLHCGNIGCGREQIGIDGHSHALDHYRSNNNHPLAIKLGSLSSSTYDLYCYACDDETRFPDNVNLGSALQIYGINIQEKIADEKTLVQLQVEQNENWQFRMVDSSGKEFEKLSASKNYGCGLINLGNSCYLNSVIQSLVNGGVPNWSLDFLGSKFPLDVVYPDNNLKCQWIKLLNAMKCEPELYPNGIKPTTFKKCIGQNHQEFSSNRQQDAMEFLTFLLDLLDKKFFSSSSSGIPNPNDLVRFMMEDRLQCNICGKVKYSYEPTEAIQIPLEENDEPQDMLERIKAYFEGQTIEFKCANCKEKVTANKKPGFKSLPQTLILNPIRIRLQNWIPVKTSNELSLPGLIDRDDMLDVSSYLSQGFDPQTENLLPDEDENRSSFTPNQCSISQLIEMGFTQNASVRALFNTGNQDAESAMNWLFQHMDDPDLNDPFVPPPNVPKKDKREVDEVSLTSMLSMGLNPNLCRKALILNNGDVNRSVEWVFNNMDDDGTFPEPEVPNEEQQQKKDLGYSTAKPYALTAVICHKGNSVHSGHYVVFIRKLVADKWKWVLYNDEKLVAADSIEDMKKNGYIYFYTRC</sequence>
<gene>
    <name type="primary">UBP14</name>
    <name evidence="9" type="synonym">GID6</name>
    <name type="ordered locus">YBR058C</name>
    <name type="ORF">YBR0515</name>
</gene>
<organism>
    <name type="scientific">Saccharomyces cerevisiae (strain ATCC 204508 / S288c)</name>
    <name type="common">Baker's yeast</name>
    <dbReference type="NCBI Taxonomy" id="559292"/>
    <lineage>
        <taxon>Eukaryota</taxon>
        <taxon>Fungi</taxon>
        <taxon>Dikarya</taxon>
        <taxon>Ascomycota</taxon>
        <taxon>Saccharomycotina</taxon>
        <taxon>Saccharomycetes</taxon>
        <taxon>Saccharomycetales</taxon>
        <taxon>Saccharomycetaceae</taxon>
        <taxon>Saccharomyces</taxon>
    </lineage>
</organism>
<accession>P38237</accession>
<accession>D6VQ57</accession>
<feature type="chain" id="PRO_0000080599" description="Ubiquitin carboxyl-terminal hydrolase 14">
    <location>
        <begin position="1"/>
        <end position="781"/>
    </location>
</feature>
<feature type="domain" description="USP">
    <location>
        <begin position="323"/>
        <end position="781"/>
    </location>
</feature>
<feature type="domain" description="UBA 1" evidence="1">
    <location>
        <begin position="576"/>
        <end position="626"/>
    </location>
</feature>
<feature type="domain" description="UBA 2" evidence="1">
    <location>
        <begin position="649"/>
        <end position="689"/>
    </location>
</feature>
<feature type="zinc finger region" description="UBP-type" evidence="2">
    <location>
        <begin position="169"/>
        <end position="279"/>
    </location>
</feature>
<feature type="active site" description="Nucleophile" evidence="11">
    <location>
        <position position="332"/>
    </location>
</feature>
<feature type="active site" description="Proton acceptor" evidence="3 4">
    <location>
        <position position="737"/>
    </location>
</feature>
<feature type="binding site" evidence="2">
    <location>
        <position position="171"/>
    </location>
    <ligand>
        <name>Zn(2+)</name>
        <dbReference type="ChEBI" id="CHEBI:29105"/>
        <label>1</label>
    </ligand>
</feature>
<feature type="binding site" evidence="2">
    <location>
        <position position="173"/>
    </location>
    <ligand>
        <name>Zn(2+)</name>
        <dbReference type="ChEBI" id="CHEBI:29105"/>
        <label>1</label>
    </ligand>
</feature>
<feature type="binding site" evidence="2">
    <location>
        <position position="192"/>
    </location>
    <ligand>
        <name>Zn(2+)</name>
        <dbReference type="ChEBI" id="CHEBI:29105"/>
        <label>2</label>
    </ligand>
</feature>
<feature type="binding site" evidence="2">
    <location>
        <position position="195"/>
    </location>
    <ligand>
        <name>Zn(2+)</name>
        <dbReference type="ChEBI" id="CHEBI:29105"/>
        <label>2</label>
    </ligand>
</feature>
<feature type="binding site" evidence="2">
    <location>
        <position position="204"/>
    </location>
    <ligand>
        <name>Zn(2+)</name>
        <dbReference type="ChEBI" id="CHEBI:29105"/>
        <label>3</label>
    </ligand>
</feature>
<feature type="binding site" evidence="2">
    <location>
        <position position="207"/>
    </location>
    <ligand>
        <name>Zn(2+)</name>
        <dbReference type="ChEBI" id="CHEBI:29105"/>
        <label>3</label>
    </ligand>
</feature>
<feature type="binding site" evidence="2">
    <location>
        <position position="212"/>
    </location>
    <ligand>
        <name>Zn(2+)</name>
        <dbReference type="ChEBI" id="CHEBI:29105"/>
        <label>2</label>
    </ligand>
</feature>
<feature type="binding site" evidence="2">
    <location>
        <position position="224"/>
    </location>
    <ligand>
        <name>Zn(2+)</name>
        <dbReference type="ChEBI" id="CHEBI:29105"/>
        <label>2</label>
    </ligand>
</feature>
<feature type="binding site" evidence="2">
    <location>
        <position position="228"/>
    </location>
    <ligand>
        <name>Zn(2+)</name>
        <dbReference type="ChEBI" id="CHEBI:29105"/>
        <label>3</label>
    </ligand>
</feature>
<feature type="binding site" evidence="2">
    <location>
        <position position="235"/>
    </location>
    <ligand>
        <name>Zn(2+)</name>
        <dbReference type="ChEBI" id="CHEBI:29105"/>
        <label>3</label>
    </ligand>
</feature>
<feature type="binding site" evidence="2">
    <location>
        <position position="253"/>
    </location>
    <ligand>
        <name>Zn(2+)</name>
        <dbReference type="ChEBI" id="CHEBI:29105"/>
        <label>1</label>
    </ligand>
</feature>
<feature type="binding site" evidence="2">
    <location>
        <position position="256"/>
    </location>
    <ligand>
        <name>Zn(2+)</name>
        <dbReference type="ChEBI" id="CHEBI:29105"/>
        <label>1</label>
    </ligand>
</feature>
<feature type="mutagenesis site" description="Loss of enzyme activity." evidence="8">
    <original>C</original>
    <variation>A</variation>
    <location>
        <position position="332"/>
    </location>
</feature>
<evidence type="ECO:0000255" key="1">
    <source>
        <dbReference type="PROSITE-ProRule" id="PRU00212"/>
    </source>
</evidence>
<evidence type="ECO:0000255" key="2">
    <source>
        <dbReference type="PROSITE-ProRule" id="PRU00502"/>
    </source>
</evidence>
<evidence type="ECO:0000255" key="3">
    <source>
        <dbReference type="PROSITE-ProRule" id="PRU10092"/>
    </source>
</evidence>
<evidence type="ECO:0000255" key="4">
    <source>
        <dbReference type="PROSITE-ProRule" id="PRU10093"/>
    </source>
</evidence>
<evidence type="ECO:0000269" key="5">
    <source>
    </source>
</evidence>
<evidence type="ECO:0000269" key="6">
    <source>
    </source>
</evidence>
<evidence type="ECO:0000269" key="7">
    <source>
    </source>
</evidence>
<evidence type="ECO:0000269" key="8">
    <source>
    </source>
</evidence>
<evidence type="ECO:0000303" key="9">
    <source>
    </source>
</evidence>
<evidence type="ECO:0000305" key="10"/>
<evidence type="ECO:0000305" key="11">
    <source>
    </source>
</evidence>
<name>UBP14_YEAST</name>
<reference key="1">
    <citation type="journal article" date="1995" name="Yeast">
        <title>Sequence and analysis of 24 kb on chromosome II of Saccharomyces cerevisiae.</title>
        <authorList>
            <person name="Aljinovic G."/>
            <person name="Pohl T.M."/>
        </authorList>
    </citation>
    <scope>NUCLEOTIDE SEQUENCE [GENOMIC DNA]</scope>
    <source>
        <strain>ATCC 204508 / S288c</strain>
    </source>
</reference>
<reference key="2">
    <citation type="journal article" date="1994" name="EMBO J.">
        <title>Complete DNA sequence of yeast chromosome II.</title>
        <authorList>
            <person name="Feldmann H."/>
            <person name="Aigle M."/>
            <person name="Aljinovic G."/>
            <person name="Andre B."/>
            <person name="Baclet M.C."/>
            <person name="Barthe C."/>
            <person name="Baur A."/>
            <person name="Becam A.-M."/>
            <person name="Biteau N."/>
            <person name="Boles E."/>
            <person name="Brandt T."/>
            <person name="Brendel M."/>
            <person name="Brueckner M."/>
            <person name="Bussereau F."/>
            <person name="Christiansen C."/>
            <person name="Contreras R."/>
            <person name="Crouzet M."/>
            <person name="Cziepluch C."/>
            <person name="Demolis N."/>
            <person name="Delaveau T."/>
            <person name="Doignon F."/>
            <person name="Domdey H."/>
            <person name="Duesterhus S."/>
            <person name="Dubois E."/>
            <person name="Dujon B."/>
            <person name="El Bakkoury M."/>
            <person name="Entian K.-D."/>
            <person name="Feuermann M."/>
            <person name="Fiers W."/>
            <person name="Fobo G.M."/>
            <person name="Fritz C."/>
            <person name="Gassenhuber J."/>
            <person name="Glansdorff N."/>
            <person name="Goffeau A."/>
            <person name="Grivell L.A."/>
            <person name="de Haan M."/>
            <person name="Hein C."/>
            <person name="Herbert C.J."/>
            <person name="Hollenberg C.P."/>
            <person name="Holmstroem K."/>
            <person name="Jacq C."/>
            <person name="Jacquet M."/>
            <person name="Jauniaux J.-C."/>
            <person name="Jonniaux J.-L."/>
            <person name="Kallesoee T."/>
            <person name="Kiesau P."/>
            <person name="Kirchrath L."/>
            <person name="Koetter P."/>
            <person name="Korol S."/>
            <person name="Liebl S."/>
            <person name="Logghe M."/>
            <person name="Lohan A.J.E."/>
            <person name="Louis E.J."/>
            <person name="Li Z.Y."/>
            <person name="Maat M.J."/>
            <person name="Mallet L."/>
            <person name="Mannhaupt G."/>
            <person name="Messenguy F."/>
            <person name="Miosga T."/>
            <person name="Molemans F."/>
            <person name="Mueller S."/>
            <person name="Nasr F."/>
            <person name="Obermaier B."/>
            <person name="Perea J."/>
            <person name="Pierard A."/>
            <person name="Piravandi E."/>
            <person name="Pohl F.M."/>
            <person name="Pohl T.M."/>
            <person name="Potier S."/>
            <person name="Proft M."/>
            <person name="Purnelle B."/>
            <person name="Ramezani Rad M."/>
            <person name="Rieger M."/>
            <person name="Rose M."/>
            <person name="Schaaff-Gerstenschlaeger I."/>
            <person name="Scherens B."/>
            <person name="Schwarzlose C."/>
            <person name="Skala J."/>
            <person name="Slonimski P.P."/>
            <person name="Smits P.H.M."/>
            <person name="Souciet J.-L."/>
            <person name="Steensma H.Y."/>
            <person name="Stucka R."/>
            <person name="Urrestarazu L.A."/>
            <person name="van der Aart Q.J.M."/>
            <person name="Van Dyck L."/>
            <person name="Vassarotti A."/>
            <person name="Vetter I."/>
            <person name="Vierendeels F."/>
            <person name="Vissers S."/>
            <person name="Wagner G."/>
            <person name="de Wergifosse P."/>
            <person name="Wolfe K.H."/>
            <person name="Zagulski M."/>
            <person name="Zimmermann F.K."/>
            <person name="Mewes H.-W."/>
            <person name="Kleine K."/>
        </authorList>
    </citation>
    <scope>NUCLEOTIDE SEQUENCE [LARGE SCALE GENOMIC DNA]</scope>
    <source>
        <strain>ATCC 204508 / S288c</strain>
    </source>
</reference>
<reference key="3">
    <citation type="journal article" date="2014" name="G3 (Bethesda)">
        <title>The reference genome sequence of Saccharomyces cerevisiae: Then and now.</title>
        <authorList>
            <person name="Engel S.R."/>
            <person name="Dietrich F.S."/>
            <person name="Fisk D.G."/>
            <person name="Binkley G."/>
            <person name="Balakrishnan R."/>
            <person name="Costanzo M.C."/>
            <person name="Dwight S.S."/>
            <person name="Hitz B.C."/>
            <person name="Karra K."/>
            <person name="Nash R.S."/>
            <person name="Weng S."/>
            <person name="Wong E.D."/>
            <person name="Lloyd P."/>
            <person name="Skrzypek M.S."/>
            <person name="Miyasato S.R."/>
            <person name="Simison M."/>
            <person name="Cherry J.M."/>
        </authorList>
    </citation>
    <scope>GENOME REANNOTATION</scope>
    <source>
        <strain>ATCC 204508 / S288c</strain>
    </source>
</reference>
<reference key="4">
    <citation type="journal article" date="2004" name="Biochemistry">
        <title>Identification of a novel 29-linked polyubiquitin binding protein, Ufd3, using polyubiquitin chain analogues.</title>
        <authorList>
            <person name="Russell N.S."/>
            <person name="Wilkinson K.D."/>
        </authorList>
    </citation>
    <scope>PROTEIN SEQUENCE OF 56-80; 120-127; 215-240; 288-303; 399-411; 430-452; 463-487; 490-500; 518-529; 540-552; 670-681; 730-743; 752-759 AND 772-780</scope>
</reference>
<reference key="5">
    <citation type="journal article" date="1997" name="EMBO J.">
        <title>In vivo disassembly of free polyubiquitin chains by yeast Ubp14 modulates rates of protein degradation by the proteasome.</title>
        <authorList>
            <person name="Amerik A.Y."/>
            <person name="Swaminathan S."/>
            <person name="Krantz B.A."/>
            <person name="Wilkinson K.D."/>
            <person name="Hochstrasser M."/>
        </authorList>
    </citation>
    <scope>FUNCTION</scope>
    <scope>CATALYTIC ACTIVITY</scope>
    <scope>ACTIVE SITE</scope>
    <scope>MUTAGENESIS OF CYS-332</scope>
</reference>
<reference key="6">
    <citation type="journal article" date="2003" name="Mol. Biol. Cell">
        <title>Catabolite degradation of fructose-1,6-bisphosphatase in the yeast Saccharomyces cerevisiae: a genome-wide screen identifies eight novel GID genes and indicates the existence of two degradation pathways.</title>
        <authorList>
            <person name="Regelmann J."/>
            <person name="Schuele T."/>
            <person name="Josupeit F.S."/>
            <person name="Horak J."/>
            <person name="Rose M."/>
            <person name="Entian K.-D."/>
            <person name="Thumm M."/>
            <person name="Wolf D.H."/>
        </authorList>
    </citation>
    <scope>FUNCTION</scope>
</reference>
<reference key="7">
    <citation type="journal article" date="2003" name="Nature">
        <title>Sequencing and comparison of yeast species to identify genes and regulatory elements.</title>
        <authorList>
            <person name="Kellis M."/>
            <person name="Patterson N."/>
            <person name="Endrizzi M."/>
            <person name="Birren B.W."/>
            <person name="Lander E.S."/>
        </authorList>
    </citation>
    <scope>IDENTIFICATION OF PROBABLE INITIATION SITE</scope>
</reference>
<reference key="8">
    <citation type="journal article" date="2003" name="Nature">
        <title>Global analysis of protein localization in budding yeast.</title>
        <authorList>
            <person name="Huh W.-K."/>
            <person name="Falvo J.V."/>
            <person name="Gerke L.C."/>
            <person name="Carroll A.S."/>
            <person name="Howson R.W."/>
            <person name="Weissman J.S."/>
            <person name="O'Shea E.K."/>
        </authorList>
    </citation>
    <scope>SUBCELLULAR LOCATION [LARGE SCALE ANALYSIS]</scope>
</reference>
<reference key="9">
    <citation type="journal article" date="2003" name="Nature">
        <title>Global analysis of protein expression in yeast.</title>
        <authorList>
            <person name="Ghaemmaghami S."/>
            <person name="Huh W.-K."/>
            <person name="Bower K."/>
            <person name="Howson R.W."/>
            <person name="Belle A."/>
            <person name="Dephoure N."/>
            <person name="O'Shea E.K."/>
            <person name="Weissman J.S."/>
        </authorList>
    </citation>
    <scope>LEVEL OF PROTEIN EXPRESSION [LARGE SCALE ANALYSIS]</scope>
</reference>
<dbReference type="EC" id="3.4.19.12" evidence="8"/>
<dbReference type="EMBL" id="Z35927">
    <property type="protein sequence ID" value="CAA85001.1"/>
    <property type="status" value="ALT_INIT"/>
    <property type="molecule type" value="Genomic_DNA"/>
</dbReference>
<dbReference type="EMBL" id="Z46260">
    <property type="protein sequence ID" value="CAA86402.1"/>
    <property type="status" value="ALT_INIT"/>
    <property type="molecule type" value="Genomic_DNA"/>
</dbReference>
<dbReference type="EMBL" id="BK006936">
    <property type="protein sequence ID" value="DAA07177.1"/>
    <property type="molecule type" value="Genomic_DNA"/>
</dbReference>
<dbReference type="PIR" id="S45916">
    <property type="entry name" value="S45916"/>
</dbReference>
<dbReference type="RefSeq" id="NP_009614.2">
    <property type="nucleotide sequence ID" value="NM_001178406.1"/>
</dbReference>
<dbReference type="SMR" id="P38237"/>
<dbReference type="BioGRID" id="32761">
    <property type="interactions" value="237"/>
</dbReference>
<dbReference type="DIP" id="DIP-4897N"/>
<dbReference type="FunCoup" id="P38237">
    <property type="interactions" value="1105"/>
</dbReference>
<dbReference type="IntAct" id="P38237">
    <property type="interactions" value="17"/>
</dbReference>
<dbReference type="MINT" id="P38237"/>
<dbReference type="STRING" id="4932.YBR058C"/>
<dbReference type="MEROPS" id="C19.083"/>
<dbReference type="iPTMnet" id="P38237"/>
<dbReference type="PaxDb" id="4932-YBR058C"/>
<dbReference type="PeptideAtlas" id="P38237"/>
<dbReference type="EnsemblFungi" id="YBR058C_mRNA">
    <property type="protein sequence ID" value="YBR058C"/>
    <property type="gene ID" value="YBR058C"/>
</dbReference>
<dbReference type="GeneID" id="852349"/>
<dbReference type="KEGG" id="sce:YBR058C"/>
<dbReference type="AGR" id="SGD:S000000262"/>
<dbReference type="SGD" id="S000000262">
    <property type="gene designation" value="UBP14"/>
</dbReference>
<dbReference type="VEuPathDB" id="FungiDB:YBR058C"/>
<dbReference type="eggNOG" id="KOG0944">
    <property type="taxonomic scope" value="Eukaryota"/>
</dbReference>
<dbReference type="GeneTree" id="ENSGT00940000156053"/>
<dbReference type="HOGENOM" id="CLU_009884_1_0_1"/>
<dbReference type="InParanoid" id="P38237"/>
<dbReference type="OMA" id="FVPCEHT"/>
<dbReference type="OrthoDB" id="361536at2759"/>
<dbReference type="BioCyc" id="YEAST:G3O-29029-MONOMER"/>
<dbReference type="BioGRID-ORCS" id="852349">
    <property type="hits" value="5 hits in 10 CRISPR screens"/>
</dbReference>
<dbReference type="PRO" id="PR:P38237"/>
<dbReference type="Proteomes" id="UP000002311">
    <property type="component" value="Chromosome II"/>
</dbReference>
<dbReference type="RNAct" id="P38237">
    <property type="molecule type" value="protein"/>
</dbReference>
<dbReference type="GO" id="GO:0005737">
    <property type="term" value="C:cytoplasm"/>
    <property type="evidence" value="ECO:0000305"/>
    <property type="project" value="SGD"/>
</dbReference>
<dbReference type="GO" id="GO:0005829">
    <property type="term" value="C:cytosol"/>
    <property type="evidence" value="ECO:0000318"/>
    <property type="project" value="GO_Central"/>
</dbReference>
<dbReference type="GO" id="GO:0005634">
    <property type="term" value="C:nucleus"/>
    <property type="evidence" value="ECO:0000318"/>
    <property type="project" value="GO_Central"/>
</dbReference>
<dbReference type="GO" id="GO:0004843">
    <property type="term" value="F:cysteine-type deubiquitinase activity"/>
    <property type="evidence" value="ECO:0000314"/>
    <property type="project" value="SGD"/>
</dbReference>
<dbReference type="GO" id="GO:0008270">
    <property type="term" value="F:zinc ion binding"/>
    <property type="evidence" value="ECO:0007669"/>
    <property type="project" value="UniProtKB-KW"/>
</dbReference>
<dbReference type="GO" id="GO:0045721">
    <property type="term" value="P:negative regulation of gluconeogenesis"/>
    <property type="evidence" value="ECO:0000315"/>
    <property type="project" value="SGD"/>
</dbReference>
<dbReference type="GO" id="GO:0043161">
    <property type="term" value="P:proteasome-mediated ubiquitin-dependent protein catabolic process"/>
    <property type="evidence" value="ECO:0000315"/>
    <property type="project" value="SGD"/>
</dbReference>
<dbReference type="GO" id="GO:0016579">
    <property type="term" value="P:protein deubiquitination"/>
    <property type="evidence" value="ECO:0007669"/>
    <property type="project" value="InterPro"/>
</dbReference>
<dbReference type="GO" id="GO:0031647">
    <property type="term" value="P:regulation of protein stability"/>
    <property type="evidence" value="ECO:0000318"/>
    <property type="project" value="GO_Central"/>
</dbReference>
<dbReference type="CDD" id="cd02658">
    <property type="entry name" value="Peptidase_C19B"/>
    <property type="match status" value="1"/>
</dbReference>
<dbReference type="CDD" id="cd14298">
    <property type="entry name" value="UBA2_scUBP14_like"/>
    <property type="match status" value="1"/>
</dbReference>
<dbReference type="FunFam" id="1.10.8.10:FF:000086">
    <property type="entry name" value="Ubiquitin carboxyl-terminal hydrolase"/>
    <property type="match status" value="1"/>
</dbReference>
<dbReference type="FunFam" id="1.10.8.10:FF:000134">
    <property type="entry name" value="Ubiquitin carboxyl-terminal hydrolase"/>
    <property type="match status" value="1"/>
</dbReference>
<dbReference type="Gene3D" id="3.90.70.10">
    <property type="entry name" value="Cysteine proteinases"/>
    <property type="match status" value="1"/>
</dbReference>
<dbReference type="Gene3D" id="1.10.8.10">
    <property type="entry name" value="DNA helicase RuvA subunit, C-terminal domain"/>
    <property type="match status" value="2"/>
</dbReference>
<dbReference type="Gene3D" id="3.30.40.10">
    <property type="entry name" value="Zinc/RING finger domain, C3HC4 (zinc finger)"/>
    <property type="match status" value="2"/>
</dbReference>
<dbReference type="InterPro" id="IPR038765">
    <property type="entry name" value="Papain-like_cys_pep_sf"/>
</dbReference>
<dbReference type="InterPro" id="IPR050164">
    <property type="entry name" value="Peptidase_C19"/>
</dbReference>
<dbReference type="InterPro" id="IPR001394">
    <property type="entry name" value="Peptidase_C19_UCH"/>
</dbReference>
<dbReference type="InterPro" id="IPR015940">
    <property type="entry name" value="UBA"/>
</dbReference>
<dbReference type="InterPro" id="IPR009060">
    <property type="entry name" value="UBA-like_sf"/>
</dbReference>
<dbReference type="InterPro" id="IPR033864">
    <property type="entry name" value="UBA2_scUBP14-like"/>
</dbReference>
<dbReference type="InterPro" id="IPR016652">
    <property type="entry name" value="Ubiquitinyl_hydrolase"/>
</dbReference>
<dbReference type="InterPro" id="IPR041432">
    <property type="entry name" value="UBP13_Znf-UBP_var"/>
</dbReference>
<dbReference type="InterPro" id="IPR018200">
    <property type="entry name" value="USP_CS"/>
</dbReference>
<dbReference type="InterPro" id="IPR028889">
    <property type="entry name" value="USP_dom"/>
</dbReference>
<dbReference type="InterPro" id="IPR013083">
    <property type="entry name" value="Znf_RING/FYVE/PHD"/>
</dbReference>
<dbReference type="InterPro" id="IPR001607">
    <property type="entry name" value="Znf_UBP"/>
</dbReference>
<dbReference type="PANTHER" id="PTHR24006">
    <property type="entry name" value="UBIQUITIN CARBOXYL-TERMINAL HYDROLASE"/>
    <property type="match status" value="1"/>
</dbReference>
<dbReference type="PANTHER" id="PTHR24006:SF664">
    <property type="entry name" value="UBIQUITIN CARBOXYL-TERMINAL HYDROLASE"/>
    <property type="match status" value="1"/>
</dbReference>
<dbReference type="Pfam" id="PF22562">
    <property type="entry name" value="UBA_7"/>
    <property type="match status" value="2"/>
</dbReference>
<dbReference type="Pfam" id="PF00443">
    <property type="entry name" value="UCH"/>
    <property type="match status" value="1"/>
</dbReference>
<dbReference type="Pfam" id="PF02148">
    <property type="entry name" value="zf-UBP"/>
    <property type="match status" value="1"/>
</dbReference>
<dbReference type="Pfam" id="PF17807">
    <property type="entry name" value="zf-UBP_var"/>
    <property type="match status" value="1"/>
</dbReference>
<dbReference type="PIRSF" id="PIRSF016308">
    <property type="entry name" value="UBP"/>
    <property type="match status" value="1"/>
</dbReference>
<dbReference type="SMART" id="SM00165">
    <property type="entry name" value="UBA"/>
    <property type="match status" value="2"/>
</dbReference>
<dbReference type="SMART" id="SM00290">
    <property type="entry name" value="ZnF_UBP"/>
    <property type="match status" value="1"/>
</dbReference>
<dbReference type="SUPFAM" id="SSF54001">
    <property type="entry name" value="Cysteine proteinases"/>
    <property type="match status" value="1"/>
</dbReference>
<dbReference type="SUPFAM" id="SSF57850">
    <property type="entry name" value="RING/U-box"/>
    <property type="match status" value="1"/>
</dbReference>
<dbReference type="SUPFAM" id="SSF46934">
    <property type="entry name" value="UBA-like"/>
    <property type="match status" value="1"/>
</dbReference>
<dbReference type="PROSITE" id="PS50030">
    <property type="entry name" value="UBA"/>
    <property type="match status" value="2"/>
</dbReference>
<dbReference type="PROSITE" id="PS00972">
    <property type="entry name" value="USP_1"/>
    <property type="match status" value="1"/>
</dbReference>
<dbReference type="PROSITE" id="PS00973">
    <property type="entry name" value="USP_2"/>
    <property type="match status" value="1"/>
</dbReference>
<dbReference type="PROSITE" id="PS50235">
    <property type="entry name" value="USP_3"/>
    <property type="match status" value="1"/>
</dbReference>
<dbReference type="PROSITE" id="PS50271">
    <property type="entry name" value="ZF_UBP"/>
    <property type="match status" value="1"/>
</dbReference>